<reference key="1">
    <citation type="submission" date="2007-05" db="EMBL/GenBank/DDBJ databases">
        <title>Complete sequence of chromosome of Staphylococcus aureus subsp. aureus JH9.</title>
        <authorList>
            <consortium name="US DOE Joint Genome Institute"/>
            <person name="Copeland A."/>
            <person name="Lucas S."/>
            <person name="Lapidus A."/>
            <person name="Barry K."/>
            <person name="Detter J.C."/>
            <person name="Glavina del Rio T."/>
            <person name="Hammon N."/>
            <person name="Israni S."/>
            <person name="Pitluck S."/>
            <person name="Chain P."/>
            <person name="Malfatti S."/>
            <person name="Shin M."/>
            <person name="Vergez L."/>
            <person name="Schmutz J."/>
            <person name="Larimer F."/>
            <person name="Land M."/>
            <person name="Hauser L."/>
            <person name="Kyrpides N."/>
            <person name="Kim E."/>
            <person name="Tomasz A."/>
            <person name="Richardson P."/>
        </authorList>
    </citation>
    <scope>NUCLEOTIDE SEQUENCE [LARGE SCALE GENOMIC DNA]</scope>
    <source>
        <strain>JH9</strain>
    </source>
</reference>
<feature type="chain" id="PRO_1000087069" description="Large ribosomal subunit protein uL6">
    <location>
        <begin position="1"/>
        <end position="178"/>
    </location>
</feature>
<sequence length="178" mass="19787">MSRVGKKIIDIPSDVTVTFDGNHVTVKGPKGELSRTLNERMTFKQEENTIEVVRPSDSKEDRTNHGTTRALLNNMVQGVSQGYVKVLELVGVGYRAQMQGKDLILNVGYSHPVEIKAEENITFSVEKNTVVKVEGISKEQVGALASNIRSVRPPEPYKGKGIRYQGEYVRRKEGKTGK</sequence>
<dbReference type="EMBL" id="CP000703">
    <property type="protein sequence ID" value="ABQ50042.1"/>
    <property type="molecule type" value="Genomic_DNA"/>
</dbReference>
<dbReference type="RefSeq" id="WP_000091975.1">
    <property type="nucleotide sequence ID" value="NC_009487.1"/>
</dbReference>
<dbReference type="SMR" id="A5IV19"/>
<dbReference type="KEGG" id="saj:SaurJH9_2262"/>
<dbReference type="HOGENOM" id="CLU_065464_1_2_9"/>
<dbReference type="GO" id="GO:0022625">
    <property type="term" value="C:cytosolic large ribosomal subunit"/>
    <property type="evidence" value="ECO:0007669"/>
    <property type="project" value="TreeGrafter"/>
</dbReference>
<dbReference type="GO" id="GO:0019843">
    <property type="term" value="F:rRNA binding"/>
    <property type="evidence" value="ECO:0007669"/>
    <property type="project" value="UniProtKB-UniRule"/>
</dbReference>
<dbReference type="GO" id="GO:0003735">
    <property type="term" value="F:structural constituent of ribosome"/>
    <property type="evidence" value="ECO:0007669"/>
    <property type="project" value="InterPro"/>
</dbReference>
<dbReference type="GO" id="GO:0002181">
    <property type="term" value="P:cytoplasmic translation"/>
    <property type="evidence" value="ECO:0007669"/>
    <property type="project" value="TreeGrafter"/>
</dbReference>
<dbReference type="FunFam" id="3.90.930.12:FF:000001">
    <property type="entry name" value="50S ribosomal protein L6"/>
    <property type="match status" value="1"/>
</dbReference>
<dbReference type="FunFam" id="3.90.930.12:FF:000002">
    <property type="entry name" value="50S ribosomal protein L6"/>
    <property type="match status" value="1"/>
</dbReference>
<dbReference type="Gene3D" id="3.90.930.12">
    <property type="entry name" value="Ribosomal protein L6, alpha-beta domain"/>
    <property type="match status" value="2"/>
</dbReference>
<dbReference type="HAMAP" id="MF_01365_B">
    <property type="entry name" value="Ribosomal_uL6_B"/>
    <property type="match status" value="1"/>
</dbReference>
<dbReference type="InterPro" id="IPR000702">
    <property type="entry name" value="Ribosomal_uL6-like"/>
</dbReference>
<dbReference type="InterPro" id="IPR036789">
    <property type="entry name" value="Ribosomal_uL6-like_a/b-dom_sf"/>
</dbReference>
<dbReference type="InterPro" id="IPR020040">
    <property type="entry name" value="Ribosomal_uL6_a/b-dom"/>
</dbReference>
<dbReference type="InterPro" id="IPR019906">
    <property type="entry name" value="Ribosomal_uL6_bac-type"/>
</dbReference>
<dbReference type="InterPro" id="IPR002358">
    <property type="entry name" value="Ribosomal_uL6_CS"/>
</dbReference>
<dbReference type="NCBIfam" id="TIGR03654">
    <property type="entry name" value="L6_bact"/>
    <property type="match status" value="1"/>
</dbReference>
<dbReference type="PANTHER" id="PTHR11655">
    <property type="entry name" value="60S/50S RIBOSOMAL PROTEIN L6/L9"/>
    <property type="match status" value="1"/>
</dbReference>
<dbReference type="PANTHER" id="PTHR11655:SF14">
    <property type="entry name" value="LARGE RIBOSOMAL SUBUNIT PROTEIN UL6M"/>
    <property type="match status" value="1"/>
</dbReference>
<dbReference type="Pfam" id="PF00347">
    <property type="entry name" value="Ribosomal_L6"/>
    <property type="match status" value="2"/>
</dbReference>
<dbReference type="PIRSF" id="PIRSF002162">
    <property type="entry name" value="Ribosomal_L6"/>
    <property type="match status" value="1"/>
</dbReference>
<dbReference type="PRINTS" id="PR00059">
    <property type="entry name" value="RIBOSOMALL6"/>
</dbReference>
<dbReference type="SUPFAM" id="SSF56053">
    <property type="entry name" value="Ribosomal protein L6"/>
    <property type="match status" value="2"/>
</dbReference>
<dbReference type="PROSITE" id="PS00525">
    <property type="entry name" value="RIBOSOMAL_L6_1"/>
    <property type="match status" value="1"/>
</dbReference>
<accession>A5IV19</accession>
<gene>
    <name evidence="1" type="primary">rplF</name>
    <name type="ordered locus">SaurJH9_2262</name>
</gene>
<name>RL6_STAA9</name>
<protein>
    <recommendedName>
        <fullName evidence="1">Large ribosomal subunit protein uL6</fullName>
    </recommendedName>
    <alternativeName>
        <fullName evidence="2">50S ribosomal protein L6</fullName>
    </alternativeName>
</protein>
<proteinExistence type="inferred from homology"/>
<organism>
    <name type="scientific">Staphylococcus aureus (strain JH9)</name>
    <dbReference type="NCBI Taxonomy" id="359786"/>
    <lineage>
        <taxon>Bacteria</taxon>
        <taxon>Bacillati</taxon>
        <taxon>Bacillota</taxon>
        <taxon>Bacilli</taxon>
        <taxon>Bacillales</taxon>
        <taxon>Staphylococcaceae</taxon>
        <taxon>Staphylococcus</taxon>
    </lineage>
</organism>
<evidence type="ECO:0000255" key="1">
    <source>
        <dbReference type="HAMAP-Rule" id="MF_01365"/>
    </source>
</evidence>
<evidence type="ECO:0000305" key="2"/>
<comment type="function">
    <text evidence="1">This protein binds to the 23S rRNA, and is important in its secondary structure. It is located near the subunit interface in the base of the L7/L12 stalk, and near the tRNA binding site of the peptidyltransferase center.</text>
</comment>
<comment type="subunit">
    <text evidence="1">Part of the 50S ribosomal subunit.</text>
</comment>
<comment type="similarity">
    <text evidence="1">Belongs to the universal ribosomal protein uL6 family.</text>
</comment>
<keyword id="KW-0687">Ribonucleoprotein</keyword>
<keyword id="KW-0689">Ribosomal protein</keyword>
<keyword id="KW-0694">RNA-binding</keyword>
<keyword id="KW-0699">rRNA-binding</keyword>